<dbReference type="EC" id="2.8.4.1" evidence="1"/>
<dbReference type="EMBL" id="X70765">
    <property type="protein sequence ID" value="CAA50044.1"/>
    <property type="molecule type" value="Genomic_DNA"/>
</dbReference>
<dbReference type="EMBL" id="CP002278">
    <property type="protein sequence ID" value="ADP77533.1"/>
    <property type="molecule type" value="Genomic_DNA"/>
</dbReference>
<dbReference type="PIR" id="S43897">
    <property type="entry name" value="S43897"/>
</dbReference>
<dbReference type="SMR" id="Q49174"/>
<dbReference type="STRING" id="523846.Mfer_0734"/>
<dbReference type="KEGG" id="mfv:Mfer_0734"/>
<dbReference type="HOGENOM" id="CLU_493170_0_0_2"/>
<dbReference type="OrthoDB" id="52468at2157"/>
<dbReference type="UniPathway" id="UPA00646">
    <property type="reaction ID" value="UER00699"/>
</dbReference>
<dbReference type="Proteomes" id="UP000002315">
    <property type="component" value="Chromosome"/>
</dbReference>
<dbReference type="GO" id="GO:0050524">
    <property type="term" value="F:coenzyme-B sulfoethylthiotransferase activity"/>
    <property type="evidence" value="ECO:0007669"/>
    <property type="project" value="UniProtKB-EC"/>
</dbReference>
<dbReference type="GO" id="GO:0046872">
    <property type="term" value="F:metal ion binding"/>
    <property type="evidence" value="ECO:0007669"/>
    <property type="project" value="UniProtKB-KW"/>
</dbReference>
<dbReference type="GO" id="GO:0015948">
    <property type="term" value="P:methanogenesis"/>
    <property type="evidence" value="ECO:0007669"/>
    <property type="project" value="UniProtKB-KW"/>
</dbReference>
<dbReference type="Gene3D" id="3.30.70.470">
    <property type="match status" value="1"/>
</dbReference>
<dbReference type="Gene3D" id="1.20.840.10">
    <property type="entry name" value="Methyl-coenzyme M reductase, alpha/beta subunit, C-terminal"/>
    <property type="match status" value="1"/>
</dbReference>
<dbReference type="Gene3D" id="3.90.390.10">
    <property type="entry name" value="Methyl-coenzyme M Reductase, Chain A, domain 1"/>
    <property type="match status" value="1"/>
</dbReference>
<dbReference type="InterPro" id="IPR016212">
    <property type="entry name" value="Me_CoM_Rdtase_asu"/>
</dbReference>
<dbReference type="InterPro" id="IPR008924">
    <property type="entry name" value="Me_CoM_Rdtase_asu/bsu_C"/>
</dbReference>
<dbReference type="InterPro" id="IPR009047">
    <property type="entry name" value="Me_CoM_Rdtase_asu_C"/>
</dbReference>
<dbReference type="InterPro" id="IPR003183">
    <property type="entry name" value="Me_CoM_Rdtase_asu_N"/>
</dbReference>
<dbReference type="InterPro" id="IPR015811">
    <property type="entry name" value="Me_CoM_Rdtase_asu_N_sub1"/>
</dbReference>
<dbReference type="InterPro" id="IPR015823">
    <property type="entry name" value="Me_CoM_Rdtase_asu_N_sub2"/>
</dbReference>
<dbReference type="InterPro" id="IPR009024">
    <property type="entry name" value="Me_CoM_Rdtase_Fd-like_fold"/>
</dbReference>
<dbReference type="NCBIfam" id="TIGR03256">
    <property type="entry name" value="met_CoM_red_alp"/>
    <property type="match status" value="1"/>
</dbReference>
<dbReference type="Pfam" id="PF02249">
    <property type="entry name" value="MCR_alpha"/>
    <property type="match status" value="1"/>
</dbReference>
<dbReference type="Pfam" id="PF02745">
    <property type="entry name" value="MCR_alpha_N"/>
    <property type="match status" value="1"/>
</dbReference>
<dbReference type="PIRSF" id="PIRSF000262">
    <property type="entry name" value="MCR_alpha"/>
    <property type="match status" value="1"/>
</dbReference>
<dbReference type="SUPFAM" id="SSF48081">
    <property type="entry name" value="Methyl-coenzyme M reductase alpha and beta chain C-terminal domain"/>
    <property type="match status" value="1"/>
</dbReference>
<dbReference type="SUPFAM" id="SSF55088">
    <property type="entry name" value="Methyl-coenzyme M reductase subunits"/>
    <property type="match status" value="1"/>
</dbReference>
<proteinExistence type="inferred from homology"/>
<sequence>MNKKNKKLFLEALEKKFKGESPEEKKTTFYCFGGWKQSERKREFVEYAKKLAKKRGIPFYNPDIGVPLGQRKLMAYRISGTDAYVEGDDLHFVNNAAIQQMVDDIKRTVIVGMDTAHAVLEKRLGVEVTPETINEYMETINHALPGGAVVQEHMVEVHPGLVDDCYAKIFTGNDELADELDKRVLIDINKEFPEEQAEMLKKYIGNRTYQVNRVPTIVVRCCDGGTVSRWSAMQIGMSFISAYKLCAGEAAIADFSFAAKHADVIEMGTILPARRARGPNEPGGIPFGVFADIIQTSRVSDDPARISLEVIGAAATLYDQVWLGSYMSGGVGFTQYASATYTDDILDDFVYYGAEYVEDKYGFCGVKPSMEVVKDIATEVTLYGLEQYEEYPTLLEDHFGGSQRAAVVAAAAGCSTAFATGNSNAGINAWYLSQILHKEGHSRLGFYGYDLQDQCGASNSLSIRSDEGLVHELRGPNYPNYAMNVGHQPEYAGIAQAPHAARGDAFVVNPLIKVAFADNDLSFDFRWPRKEIARGALREFMPDGERTLIIPASK</sequence>
<name>MCRX_METFV</name>
<keyword id="KW-0479">Metal-binding</keyword>
<keyword id="KW-0484">Methanogenesis</keyword>
<keyword id="KW-0488">Methylation</keyword>
<keyword id="KW-0533">Nickel</keyword>
<keyword id="KW-1185">Reference proteome</keyword>
<keyword id="KW-0808">Transferase</keyword>
<gene>
    <name type="primary">mrtA</name>
    <name type="synonym">mcrIIA</name>
    <name type="ordered locus">Mfer_0734</name>
</gene>
<protein>
    <recommendedName>
        <fullName>Methyl-coenzyme M reductase II subunit alpha</fullName>
        <shortName>MCR II alpha</shortName>
        <ecNumber evidence="1">2.8.4.1</ecNumber>
    </recommendedName>
    <alternativeName>
        <fullName>Coenzyme-B sulfoethylthiotransferase alpha</fullName>
    </alternativeName>
</protein>
<evidence type="ECO:0000250" key="1">
    <source>
        <dbReference type="UniProtKB" id="P11558"/>
    </source>
</evidence>
<evidence type="ECO:0000305" key="2"/>
<accession>Q49174</accession>
<accession>E3GZ01</accession>
<reference key="1">
    <citation type="journal article" date="1994" name="Mol. Gen. Genet.">
        <title>Characterization and phylogeny of mcrII, a gene cluster encoding an isoenzyme of methyl coenzyme M reductase from hyperthermophilic Methanothermus fervidus.</title>
        <authorList>
            <person name="Lehmacher A."/>
            <person name="Klenk H.-P."/>
        </authorList>
    </citation>
    <scope>NUCLEOTIDE SEQUENCE [GENOMIC DNA]</scope>
    <source>
        <strain>ATCC 43054 / DSM 2088 / JCM 10308 / V24 S</strain>
    </source>
</reference>
<reference key="2">
    <citation type="journal article" date="2010" name="Stand. Genomic Sci.">
        <title>Complete genome sequence of Methanothermus fervidus type strain (V24S).</title>
        <authorList>
            <person name="Anderson I."/>
            <person name="Djao O.D."/>
            <person name="Misra M."/>
            <person name="Chertkov O."/>
            <person name="Nolan M."/>
            <person name="Lucas S."/>
            <person name="Lapidus A."/>
            <person name="Del Rio T.G."/>
            <person name="Tice H."/>
            <person name="Cheng J.F."/>
            <person name="Tapia R."/>
            <person name="Han C."/>
            <person name="Goodwin L."/>
            <person name="Pitluck S."/>
            <person name="Liolios K."/>
            <person name="Ivanova N."/>
            <person name="Mavromatis K."/>
            <person name="Mikhailova N."/>
            <person name="Pati A."/>
            <person name="Brambilla E."/>
            <person name="Chen A."/>
            <person name="Palaniappan K."/>
            <person name="Land M."/>
            <person name="Hauser L."/>
            <person name="Chang Y.J."/>
            <person name="Jeffries C.D."/>
            <person name="Sikorski J."/>
            <person name="Spring S."/>
            <person name="Rohde M."/>
            <person name="Eichinger K."/>
            <person name="Huber H."/>
            <person name="Wirth R."/>
            <person name="Goker M."/>
            <person name="Detter J.C."/>
            <person name="Woyke T."/>
            <person name="Bristow J."/>
            <person name="Eisen J.A."/>
            <person name="Markowitz V."/>
            <person name="Hugenholtz P."/>
            <person name="Klenk H.P."/>
            <person name="Kyrpides N.C."/>
        </authorList>
    </citation>
    <scope>NUCLEOTIDE SEQUENCE [LARGE SCALE GENOMIC DNA]</scope>
    <source>
        <strain>ATCC 43054 / DSM 2088 / JCM 10308 / V24 S</strain>
    </source>
</reference>
<feature type="chain" id="PRO_0000147451" description="Methyl-coenzyme M reductase II subunit alpha">
    <location>
        <begin position="1"/>
        <end position="554"/>
    </location>
</feature>
<feature type="binding site" description="axial binding residue" evidence="1">
    <location>
        <position position="151"/>
    </location>
    <ligand>
        <name>coenzyme F430</name>
        <dbReference type="ChEBI" id="CHEBI:60540"/>
    </ligand>
    <ligandPart>
        <name>Ni</name>
        <dbReference type="ChEBI" id="CHEBI:28112"/>
    </ligandPart>
</feature>
<feature type="binding site" description="in chain A" evidence="1">
    <location>
        <position position="229"/>
    </location>
    <ligand>
        <name>coenzyme B</name>
        <dbReference type="ChEBI" id="CHEBI:58596"/>
        <note>ligand shared between two alpha subunits</note>
    </ligand>
</feature>
<feature type="binding site" description="in chain A" evidence="1">
    <location>
        <begin position="260"/>
        <end position="261"/>
    </location>
    <ligand>
        <name>coenzyme B</name>
        <dbReference type="ChEBI" id="CHEBI:58596"/>
        <note>ligand shared between two alpha subunits</note>
    </ligand>
</feature>
<feature type="binding site" description="in chain B" evidence="1">
    <location>
        <position position="274"/>
    </location>
    <ligand>
        <name>coenzyme B</name>
        <dbReference type="ChEBI" id="CHEBI:58596"/>
        <note>ligand shared between two alpha subunits</note>
    </ligand>
</feature>
<feature type="binding site" evidence="1">
    <location>
        <position position="336"/>
    </location>
    <ligand>
        <name>coenzyme M</name>
        <dbReference type="ChEBI" id="CHEBI:58319"/>
    </ligand>
</feature>
<feature type="binding site" evidence="1">
    <location>
        <position position="447"/>
    </location>
    <ligand>
        <name>coenzyme M</name>
        <dbReference type="ChEBI" id="CHEBI:58319"/>
    </ligand>
</feature>
<feature type="sequence conflict" description="In Ref. 1; CAA50044." evidence="2" ref="1">
    <original>A</original>
    <variation>G</variation>
    <location>
        <position position="273"/>
    </location>
</feature>
<comment type="function">
    <text evidence="1">Component of the methyl-coenzyme M reductase (MCR) I that catalyzes the reductive cleavage of methyl-coenzyme M (CoM-S-CH3 or 2-(methylthio)ethanesulfonate) using coenzyme B (CoB or 7-mercaptoheptanoylthreonine phosphate) as reductant which results in the production of methane and the mixed heterodisulfide of CoB and CoM (CoM-S-S-CoB). This is the final step in methanogenesis.</text>
</comment>
<comment type="catalytic activity">
    <reaction evidence="1">
        <text>coenzyme B + methyl-coenzyme M = methane + coenzyme M-coenzyme B heterodisulfide</text>
        <dbReference type="Rhea" id="RHEA:12532"/>
        <dbReference type="ChEBI" id="CHEBI:16183"/>
        <dbReference type="ChEBI" id="CHEBI:58286"/>
        <dbReference type="ChEBI" id="CHEBI:58411"/>
        <dbReference type="ChEBI" id="CHEBI:58596"/>
        <dbReference type="EC" id="2.8.4.1"/>
    </reaction>
    <physiologicalReaction direction="left-to-right" evidence="1">
        <dbReference type="Rhea" id="RHEA:12533"/>
    </physiologicalReaction>
</comment>
<comment type="cofactor">
    <cofactor evidence="1">
        <name>coenzyme F430</name>
        <dbReference type="ChEBI" id="CHEBI:60540"/>
    </cofactor>
    <text evidence="1">Binds 2 coenzyme F430 non-covalently per MCR complex. Coenzyme F430 is a yellow nickel porphinoid. Methyl-coenzyme-M reductase is activated when the enzyme-bound coenzyme F430 is reduced to the Ni(I) oxidation state.</text>
</comment>
<comment type="pathway">
    <text evidence="1">One-carbon metabolism; methyl-coenzyme M reduction; methane from methyl-coenzyme M: step 1/1.</text>
</comment>
<comment type="subunit">
    <text evidence="1">MCR is a hexamer of two alpha, two beta, and two gamma chains, forming a dimer of heterotrimers.</text>
</comment>
<comment type="similarity">
    <text evidence="2">Belongs to the methyl-coenzyme M reductase alpha subunit family.</text>
</comment>
<organism>
    <name type="scientific">Methanothermus fervidus (strain ATCC 43054 / DSM 2088 / JCM 10308 / V24 S)</name>
    <dbReference type="NCBI Taxonomy" id="523846"/>
    <lineage>
        <taxon>Archaea</taxon>
        <taxon>Methanobacteriati</taxon>
        <taxon>Methanobacteriota</taxon>
        <taxon>Methanomada group</taxon>
        <taxon>Methanobacteria</taxon>
        <taxon>Methanobacteriales</taxon>
        <taxon>Methanothermaceae</taxon>
        <taxon>Methanothermus</taxon>
    </lineage>
</organism>